<reference key="1">
    <citation type="journal article" date="2000" name="DNA Res.">
        <title>Prediction of the coding sequences of unidentified human genes. XVIII. The complete sequences of 100 new cDNA clones from brain which code for large proteins in vitro.</title>
        <authorList>
            <person name="Nagase T."/>
            <person name="Kikuno R."/>
            <person name="Nakayama M."/>
            <person name="Hirosawa M."/>
            <person name="Ohara O."/>
        </authorList>
    </citation>
    <scope>NUCLEOTIDE SEQUENCE [LARGE SCALE MRNA] (ISOFORM 2)</scope>
    <source>
        <tissue>Brain</tissue>
    </source>
</reference>
<reference key="2">
    <citation type="journal article" date="2004" name="Genome Res.">
        <title>The status, quality, and expansion of the NIH full-length cDNA project: the Mammalian Gene Collection (MGC).</title>
        <authorList>
            <consortium name="The MGC Project Team"/>
        </authorList>
    </citation>
    <scope>NUCLEOTIDE SEQUENCE [LARGE SCALE MRNA] OF 178-691 (ISOFORM 1)</scope>
    <source>
        <tissue>Uterus</tissue>
    </source>
</reference>
<reference key="3">
    <citation type="journal article" date="2007" name="BMC Genomics">
        <title>The full-ORF clone resource of the German cDNA consortium.</title>
        <authorList>
            <person name="Bechtel S."/>
            <person name="Rosenfelder H."/>
            <person name="Duda A."/>
            <person name="Schmidt C.P."/>
            <person name="Ernst U."/>
            <person name="Wellenreuther R."/>
            <person name="Mehrle A."/>
            <person name="Schuster C."/>
            <person name="Bahr A."/>
            <person name="Bloecker H."/>
            <person name="Heubner D."/>
            <person name="Hoerlein A."/>
            <person name="Michel G."/>
            <person name="Wedler H."/>
            <person name="Koehrer K."/>
            <person name="Ottenwaelder B."/>
            <person name="Poustka A."/>
            <person name="Wiemann S."/>
            <person name="Schupp I."/>
        </authorList>
    </citation>
    <scope>NUCLEOTIDE SEQUENCE [LARGE SCALE MRNA] OF 453-691</scope>
    <source>
        <tissue>Melanoma</tissue>
    </source>
</reference>
<reference key="4">
    <citation type="journal article" date="2008" name="Proc. Natl. Acad. Sci. U.S.A.">
        <title>A quantitative atlas of mitotic phosphorylation.</title>
        <authorList>
            <person name="Dephoure N."/>
            <person name="Zhou C."/>
            <person name="Villen J."/>
            <person name="Beausoleil S.A."/>
            <person name="Bakalarski C.E."/>
            <person name="Elledge S.J."/>
            <person name="Gygi S.P."/>
        </authorList>
    </citation>
    <scope>IDENTIFICATION BY MASS SPECTROMETRY [LARGE SCALE ANALYSIS]</scope>
    <source>
        <tissue>Cervix carcinoma</tissue>
    </source>
</reference>
<reference key="5">
    <citation type="journal article" date="2009" name="Anal. Chem.">
        <title>Lys-N and trypsin cover complementary parts of the phosphoproteome in a refined SCX-based approach.</title>
        <authorList>
            <person name="Gauci S."/>
            <person name="Helbig A.O."/>
            <person name="Slijper M."/>
            <person name="Krijgsveld J."/>
            <person name="Heck A.J."/>
            <person name="Mohammed S."/>
        </authorList>
    </citation>
    <scope>ACETYLATION [LARGE SCALE ANALYSIS] AT ALA-2</scope>
    <scope>CLEAVAGE OF INITIATOR METHIONINE [LARGE SCALE ANALYSIS]</scope>
    <scope>IDENTIFICATION BY MASS SPECTROMETRY [LARGE SCALE ANALYSIS]</scope>
</reference>
<reference key="6">
    <citation type="journal article" date="2012" name="Proc. Natl. Acad. Sci. U.S.A.">
        <title>N-terminal acetylome analyses and functional insights of the N-terminal acetyltransferase NatB.</title>
        <authorList>
            <person name="Van Damme P."/>
            <person name="Lasa M."/>
            <person name="Polevoda B."/>
            <person name="Gazquez C."/>
            <person name="Elosegui-Artola A."/>
            <person name="Kim D.S."/>
            <person name="De Juan-Pardo E."/>
            <person name="Demeyer K."/>
            <person name="Hole K."/>
            <person name="Larrea E."/>
            <person name="Timmerman E."/>
            <person name="Prieto J."/>
            <person name="Arnesen T."/>
            <person name="Sherman F."/>
            <person name="Gevaert K."/>
            <person name="Aldabe R."/>
        </authorList>
    </citation>
    <scope>ACETYLATION [LARGE SCALE ANALYSIS] AT ALA-2</scope>
    <scope>CLEAVAGE OF INITIATOR METHIONINE [LARGE SCALE ANALYSIS]</scope>
    <scope>IDENTIFICATION BY MASS SPECTROMETRY [LARGE SCALE ANALYSIS]</scope>
</reference>
<reference key="7">
    <citation type="submission" date="2004-11" db="PDB data bank">
        <title>Solution structure of RNA binding domain in BAB13405.</title>
        <authorList>
            <consortium name="RIKEN structural genomics initiative (RSGI)"/>
        </authorList>
    </citation>
    <scope>STRUCTURE BY NMR OF 71-145</scope>
</reference>
<protein>
    <recommendedName>
        <fullName>Ribonucleoprotein PTB-binding 2</fullName>
    </recommendedName>
    <alternativeName>
        <fullName>Protein raver-2</fullName>
    </alternativeName>
</protein>
<feature type="initiator methionine" description="Removed" evidence="6 7">
    <location>
        <position position="1"/>
    </location>
</feature>
<feature type="chain" id="PRO_0000081490" description="Ribonucleoprotein PTB-binding 2">
    <location>
        <begin position="2"/>
        <end position="691"/>
    </location>
</feature>
<feature type="domain" description="RRM 1" evidence="2">
    <location>
        <begin position="69"/>
        <end position="140"/>
    </location>
</feature>
<feature type="domain" description="RRM 2" evidence="2">
    <location>
        <begin position="142"/>
        <end position="220"/>
    </location>
</feature>
<feature type="domain" description="RRM 3" evidence="2">
    <location>
        <begin position="231"/>
        <end position="309"/>
    </location>
</feature>
<feature type="region of interest" description="Disordered" evidence="3">
    <location>
        <begin position="1"/>
        <end position="47"/>
    </location>
</feature>
<feature type="region of interest" description="Disordered" evidence="3">
    <location>
        <begin position="492"/>
        <end position="522"/>
    </location>
</feature>
<feature type="region of interest" description="Disordered" evidence="3">
    <location>
        <begin position="543"/>
        <end position="574"/>
    </location>
</feature>
<feature type="compositionally biased region" description="Gly residues" evidence="3">
    <location>
        <begin position="1"/>
        <end position="30"/>
    </location>
</feature>
<feature type="compositionally biased region" description="Polar residues" evidence="3">
    <location>
        <begin position="548"/>
        <end position="569"/>
    </location>
</feature>
<feature type="modified residue" description="N-acetylalanine" evidence="6 7">
    <location>
        <position position="2"/>
    </location>
</feature>
<feature type="splice variant" id="VSP_013676" description="In isoform 2." evidence="4">
    <location>
        <begin position="397"/>
        <end position="409"/>
    </location>
</feature>
<feature type="strand" evidence="8">
    <location>
        <begin position="71"/>
        <end position="75"/>
    </location>
</feature>
<feature type="helix" evidence="8">
    <location>
        <begin position="82"/>
        <end position="88"/>
    </location>
</feature>
<feature type="strand" evidence="8">
    <location>
        <begin position="97"/>
        <end position="100"/>
    </location>
</feature>
<feature type="helix" evidence="8">
    <location>
        <begin position="101"/>
        <end position="103"/>
    </location>
</feature>
<feature type="strand" evidence="8">
    <location>
        <begin position="105"/>
        <end position="108"/>
    </location>
</feature>
<feature type="helix" evidence="8">
    <location>
        <begin position="113"/>
        <end position="123"/>
    </location>
</feature>
<feature type="strand" evidence="8">
    <location>
        <begin position="126"/>
        <end position="128"/>
    </location>
</feature>
<feature type="strand" evidence="8">
    <location>
        <begin position="131"/>
        <end position="137"/>
    </location>
</feature>
<sequence>MAAAAGDGGGEGGAGLGSAAGLGPGPGLRGQGPSAEAHEGAPDPMPAALHPEEVAARLQRMQRELSNRRKILVKNLPQDSNCQEVHDLLKDYDLKYCYVDRNKRTAFVTLLNGEQAQNAIQMFHQYSFRGKDLIVQLQPTDALLCITNVPISFTSEEFEELVRAYGNIERCFLVYSEVTGHSKGYGFVEYMKKDFAAKARLELLGRQLGASALFAQWMDVNLLASELIHSKCLCIDKLPSDYRDSEELLQIFSSVHKPVFCQLAQDEGSYVGGFAVVEYSTAEQAEEVQQAADGMTIKGSKVQVSFCAPGAPGRSTLAALIAAQRVMHSNQKGLLPEPNPVQIMKSLNNPAMLQVLLQPQLCGRAVKPAVLGTPHSLPHLMNPSISPAFLHLNKAHQSSVMGNTSNLFLQNLSHIPLAQQQLMKFENIHTNNKPGLLGEPPAVVLQTALGIGSVLPLKKELGHHHGEAHKTSSLIPTQTTITAGMGMLPFFPNQHIAGQAGPGHSNTQEKQPATVGMAEGNFSGSQPYLQSFPNLAAGSLLVGHHKQQQSQPKGTEISSGAASKNQTSLLGEPPKEIRLSKNPYLNLASVLPSVCLSSPASKTTLHKTGIASSILDAISQGSESQHALEKCIAYSPPFGDYAQVSSLRNEKRGSSYLISAPEGGSVECVDQHSQGTGAYYMETYLKKKRVY</sequence>
<organism>
    <name type="scientific">Homo sapiens</name>
    <name type="common">Human</name>
    <dbReference type="NCBI Taxonomy" id="9606"/>
    <lineage>
        <taxon>Eukaryota</taxon>
        <taxon>Metazoa</taxon>
        <taxon>Chordata</taxon>
        <taxon>Craniata</taxon>
        <taxon>Vertebrata</taxon>
        <taxon>Euteleostomi</taxon>
        <taxon>Mammalia</taxon>
        <taxon>Eutheria</taxon>
        <taxon>Euarchontoglires</taxon>
        <taxon>Primates</taxon>
        <taxon>Haplorrhini</taxon>
        <taxon>Catarrhini</taxon>
        <taxon>Hominidae</taxon>
        <taxon>Homo</taxon>
    </lineage>
</organism>
<comment type="function">
    <text evidence="5">May bind single-stranded nucleic acids.</text>
</comment>
<comment type="subunit">
    <text evidence="1">Interacts with PTBP1 and RAVER1.</text>
</comment>
<comment type="subcellular location">
    <subcellularLocation>
        <location evidence="1">Nucleus</location>
    </subcellularLocation>
    <subcellularLocation>
        <location evidence="1">Cytoplasm</location>
    </subcellularLocation>
    <text evidence="1">May shuttle between the nucleus and the cytoplasm.</text>
</comment>
<comment type="alternative products">
    <event type="alternative splicing"/>
    <isoform>
        <id>Q9HCJ3-1</id>
        <name>1</name>
        <sequence type="displayed"/>
    </isoform>
    <isoform>
        <id>Q9HCJ3-2</id>
        <name>2</name>
        <sequence type="described" ref="VSP_013676"/>
    </isoform>
</comment>
<comment type="sequence caution" evidence="5">
    <conflict type="erroneous initiation">
        <sequence resource="EMBL-CDS" id="BAB13405"/>
    </conflict>
</comment>
<evidence type="ECO:0000250" key="1"/>
<evidence type="ECO:0000255" key="2">
    <source>
        <dbReference type="PROSITE-ProRule" id="PRU00176"/>
    </source>
</evidence>
<evidence type="ECO:0000256" key="3">
    <source>
        <dbReference type="SAM" id="MobiDB-lite"/>
    </source>
</evidence>
<evidence type="ECO:0000303" key="4">
    <source>
    </source>
</evidence>
<evidence type="ECO:0000305" key="5"/>
<evidence type="ECO:0007744" key="6">
    <source>
    </source>
</evidence>
<evidence type="ECO:0007744" key="7">
    <source>
    </source>
</evidence>
<evidence type="ECO:0007829" key="8">
    <source>
        <dbReference type="PDB" id="1WG1"/>
    </source>
</evidence>
<proteinExistence type="evidence at protein level"/>
<accession>Q9HCJ3</accession>
<accession>Q6P141</accession>
<accession>Q9NPV7</accession>
<keyword id="KW-0002">3D-structure</keyword>
<keyword id="KW-0007">Acetylation</keyword>
<keyword id="KW-0025">Alternative splicing</keyword>
<keyword id="KW-0963">Cytoplasm</keyword>
<keyword id="KW-0539">Nucleus</keyword>
<keyword id="KW-1267">Proteomics identification</keyword>
<keyword id="KW-1185">Reference proteome</keyword>
<keyword id="KW-0677">Repeat</keyword>
<keyword id="KW-0694">RNA-binding</keyword>
<name>RAVR2_HUMAN</name>
<gene>
    <name type="primary">RAVER2</name>
    <name type="synonym">KIAA1579</name>
</gene>
<dbReference type="EMBL" id="AB046799">
    <property type="protein sequence ID" value="BAB13405.1"/>
    <property type="status" value="ALT_INIT"/>
    <property type="molecule type" value="mRNA"/>
</dbReference>
<dbReference type="EMBL" id="BC065303">
    <property type="protein sequence ID" value="AAH65303.1"/>
    <property type="molecule type" value="mRNA"/>
</dbReference>
<dbReference type="EMBL" id="AL359613">
    <property type="protein sequence ID" value="CAB94883.1"/>
    <property type="molecule type" value="mRNA"/>
</dbReference>
<dbReference type="CCDS" id="CCDS41345.1">
    <molecule id="Q9HCJ3-2"/>
</dbReference>
<dbReference type="CCDS" id="CCDS90967.1">
    <molecule id="Q9HCJ3-1"/>
</dbReference>
<dbReference type="PIR" id="T50631">
    <property type="entry name" value="T50631"/>
</dbReference>
<dbReference type="RefSeq" id="NP_001353094.1">
    <molecule id="Q9HCJ3-1"/>
    <property type="nucleotide sequence ID" value="NM_001366165.2"/>
</dbReference>
<dbReference type="RefSeq" id="NP_060681.2">
    <molecule id="Q9HCJ3-2"/>
    <property type="nucleotide sequence ID" value="NM_018211.3"/>
</dbReference>
<dbReference type="RefSeq" id="XP_006710801.2">
    <property type="nucleotide sequence ID" value="XM_006710738.3"/>
</dbReference>
<dbReference type="PDB" id="1WG1">
    <property type="method" value="NMR"/>
    <property type="chains" value="A=71-145"/>
</dbReference>
<dbReference type="PDBsum" id="1WG1"/>
<dbReference type="SMR" id="Q9HCJ3"/>
<dbReference type="BioGRID" id="120520">
    <property type="interactions" value="19"/>
</dbReference>
<dbReference type="FunCoup" id="Q9HCJ3">
    <property type="interactions" value="174"/>
</dbReference>
<dbReference type="IntAct" id="Q9HCJ3">
    <property type="interactions" value="7"/>
</dbReference>
<dbReference type="STRING" id="9606.ENSP00000360112"/>
<dbReference type="GlyGen" id="Q9HCJ3">
    <property type="glycosylation" value="1 site, 1 N-linked glycan (1 site)"/>
</dbReference>
<dbReference type="iPTMnet" id="Q9HCJ3"/>
<dbReference type="PhosphoSitePlus" id="Q9HCJ3"/>
<dbReference type="BioMuta" id="RAVER2"/>
<dbReference type="DMDM" id="67466983"/>
<dbReference type="jPOST" id="Q9HCJ3"/>
<dbReference type="MassIVE" id="Q9HCJ3"/>
<dbReference type="PaxDb" id="9606-ENSP00000360112"/>
<dbReference type="PeptideAtlas" id="Q9HCJ3"/>
<dbReference type="ProteomicsDB" id="81738">
    <molecule id="Q9HCJ3-1"/>
</dbReference>
<dbReference type="ProteomicsDB" id="81739">
    <molecule id="Q9HCJ3-2"/>
</dbReference>
<dbReference type="Pumba" id="Q9HCJ3"/>
<dbReference type="Antibodypedia" id="51338">
    <property type="antibodies" value="61 antibodies from 14 providers"/>
</dbReference>
<dbReference type="DNASU" id="55225"/>
<dbReference type="Ensembl" id="ENST00000294428.8">
    <molecule id="Q9HCJ3-1"/>
    <property type="protein sequence ID" value="ENSP00000294428.3"/>
    <property type="gene ID" value="ENSG00000162437.15"/>
</dbReference>
<dbReference type="Ensembl" id="ENST00000371072.8">
    <molecule id="Q9HCJ3-2"/>
    <property type="protein sequence ID" value="ENSP00000360112.4"/>
    <property type="gene ID" value="ENSG00000162437.15"/>
</dbReference>
<dbReference type="GeneID" id="55225"/>
<dbReference type="KEGG" id="hsa:55225"/>
<dbReference type="MANE-Select" id="ENST00000294428.8">
    <property type="protein sequence ID" value="ENSP00000294428.3"/>
    <property type="RefSeq nucleotide sequence ID" value="NM_001366165.2"/>
    <property type="RefSeq protein sequence ID" value="NP_001353094.1"/>
</dbReference>
<dbReference type="UCSC" id="uc001dbs.3">
    <molecule id="Q9HCJ3-1"/>
    <property type="organism name" value="human"/>
</dbReference>
<dbReference type="AGR" id="HGNC:25577"/>
<dbReference type="CTD" id="55225"/>
<dbReference type="DisGeNET" id="55225"/>
<dbReference type="GeneCards" id="RAVER2"/>
<dbReference type="HGNC" id="HGNC:25577">
    <property type="gene designation" value="RAVER2"/>
</dbReference>
<dbReference type="HPA" id="ENSG00000162437">
    <property type="expression patterns" value="Low tissue specificity"/>
</dbReference>
<dbReference type="MIM" id="609953">
    <property type="type" value="gene"/>
</dbReference>
<dbReference type="neXtProt" id="NX_Q9HCJ3"/>
<dbReference type="OpenTargets" id="ENSG00000162437"/>
<dbReference type="PharmGKB" id="PA144596391"/>
<dbReference type="VEuPathDB" id="HostDB:ENSG00000162437"/>
<dbReference type="eggNOG" id="ENOG502QUKC">
    <property type="taxonomic scope" value="Eukaryota"/>
</dbReference>
<dbReference type="GeneTree" id="ENSGT00940000158648"/>
<dbReference type="HOGENOM" id="CLU_016492_2_0_1"/>
<dbReference type="InParanoid" id="Q9HCJ3"/>
<dbReference type="OMA" id="FADQHSQ"/>
<dbReference type="OrthoDB" id="639027at2759"/>
<dbReference type="PAN-GO" id="Q9HCJ3">
    <property type="GO annotations" value="3 GO annotations based on evolutionary models"/>
</dbReference>
<dbReference type="PhylomeDB" id="Q9HCJ3"/>
<dbReference type="TreeFam" id="TF331660"/>
<dbReference type="PathwayCommons" id="Q9HCJ3"/>
<dbReference type="SignaLink" id="Q9HCJ3"/>
<dbReference type="BioGRID-ORCS" id="55225">
    <property type="hits" value="19 hits in 1160 CRISPR screens"/>
</dbReference>
<dbReference type="ChiTaRS" id="RAVER2">
    <property type="organism name" value="human"/>
</dbReference>
<dbReference type="EvolutionaryTrace" id="Q9HCJ3"/>
<dbReference type="GenomeRNAi" id="55225"/>
<dbReference type="Pharos" id="Q9HCJ3">
    <property type="development level" value="Tbio"/>
</dbReference>
<dbReference type="PRO" id="PR:Q9HCJ3"/>
<dbReference type="Proteomes" id="UP000005640">
    <property type="component" value="Chromosome 1"/>
</dbReference>
<dbReference type="RNAct" id="Q9HCJ3">
    <property type="molecule type" value="protein"/>
</dbReference>
<dbReference type="Bgee" id="ENSG00000162437">
    <property type="expression patterns" value="Expressed in jejunal mucosa and 172 other cell types or tissues"/>
</dbReference>
<dbReference type="ExpressionAtlas" id="Q9HCJ3">
    <property type="expression patterns" value="baseline and differential"/>
</dbReference>
<dbReference type="GO" id="GO:0005737">
    <property type="term" value="C:cytoplasm"/>
    <property type="evidence" value="ECO:0007669"/>
    <property type="project" value="UniProtKB-SubCell"/>
</dbReference>
<dbReference type="GO" id="GO:0005634">
    <property type="term" value="C:nucleus"/>
    <property type="evidence" value="ECO:0007669"/>
    <property type="project" value="UniProtKB-SubCell"/>
</dbReference>
<dbReference type="GO" id="GO:0003723">
    <property type="term" value="F:RNA binding"/>
    <property type="evidence" value="ECO:0007005"/>
    <property type="project" value="UniProtKB"/>
</dbReference>
<dbReference type="CDD" id="cd12664">
    <property type="entry name" value="RRM1_RAVER2"/>
    <property type="match status" value="1"/>
</dbReference>
<dbReference type="CDD" id="cd12666">
    <property type="entry name" value="RRM2_RAVER2"/>
    <property type="match status" value="1"/>
</dbReference>
<dbReference type="CDD" id="cd12668">
    <property type="entry name" value="RRM3_RAVER2"/>
    <property type="match status" value="1"/>
</dbReference>
<dbReference type="FunFam" id="3.30.70.330:FF:000116">
    <property type="entry name" value="Putative ribonucleoprotein PTB-binding 1"/>
    <property type="match status" value="1"/>
</dbReference>
<dbReference type="FunFam" id="3.30.70.330:FF:000125">
    <property type="entry name" value="Putative ribonucleoprotein PTB-binding 1"/>
    <property type="match status" value="1"/>
</dbReference>
<dbReference type="Gene3D" id="3.30.70.330">
    <property type="match status" value="3"/>
</dbReference>
<dbReference type="InterPro" id="IPR050502">
    <property type="entry name" value="Euk_RNA-bind_prot"/>
</dbReference>
<dbReference type="InterPro" id="IPR012677">
    <property type="entry name" value="Nucleotide-bd_a/b_plait_sf"/>
</dbReference>
<dbReference type="InterPro" id="IPR047943">
    <property type="entry name" value="RAVER2_RRM1"/>
</dbReference>
<dbReference type="InterPro" id="IPR034636">
    <property type="entry name" value="RAVER2_RRM2"/>
</dbReference>
<dbReference type="InterPro" id="IPR047942">
    <property type="entry name" value="RAVER2_RRM3"/>
</dbReference>
<dbReference type="InterPro" id="IPR035979">
    <property type="entry name" value="RBD_domain_sf"/>
</dbReference>
<dbReference type="InterPro" id="IPR000504">
    <property type="entry name" value="RRM_dom"/>
</dbReference>
<dbReference type="PANTHER" id="PTHR48025">
    <property type="entry name" value="OS02G0815200 PROTEIN"/>
    <property type="match status" value="1"/>
</dbReference>
<dbReference type="PANTHER" id="PTHR48025:SF1">
    <property type="entry name" value="RRM DOMAIN-CONTAINING PROTEIN"/>
    <property type="match status" value="1"/>
</dbReference>
<dbReference type="Pfam" id="PF00076">
    <property type="entry name" value="RRM_1"/>
    <property type="match status" value="3"/>
</dbReference>
<dbReference type="SMART" id="SM00360">
    <property type="entry name" value="RRM"/>
    <property type="match status" value="3"/>
</dbReference>
<dbReference type="SUPFAM" id="SSF54928">
    <property type="entry name" value="RNA-binding domain, RBD"/>
    <property type="match status" value="2"/>
</dbReference>
<dbReference type="PROSITE" id="PS50102">
    <property type="entry name" value="RRM"/>
    <property type="match status" value="3"/>
</dbReference>